<feature type="chain" id="PRO_0000235247" description="Nucleoporin ndc-1">
    <location>
        <begin position="1"/>
        <end position="588"/>
    </location>
</feature>
<feature type="topological domain" description="Cytoplasmic" evidence="2">
    <location>
        <begin position="1"/>
        <end position="79"/>
    </location>
</feature>
<feature type="transmembrane region" description="Helical; Name=1" evidence="2">
    <location>
        <begin position="80"/>
        <end position="100"/>
    </location>
</feature>
<feature type="topological domain" description="Perinuclear space" evidence="2">
    <location>
        <begin position="101"/>
        <end position="122"/>
    </location>
</feature>
<feature type="transmembrane region" description="Helical; Name=2" evidence="2">
    <location>
        <begin position="123"/>
        <end position="143"/>
    </location>
</feature>
<feature type="topological domain" description="Cytoplasmic" evidence="2">
    <location>
        <begin position="144"/>
        <end position="159"/>
    </location>
</feature>
<feature type="transmembrane region" description="Helical; Name=3" evidence="2">
    <location>
        <begin position="160"/>
        <end position="180"/>
    </location>
</feature>
<feature type="topological domain" description="Perinuclear space" evidence="2">
    <location>
        <begin position="181"/>
        <end position="190"/>
    </location>
</feature>
<feature type="transmembrane region" description="Helical; Name=4" evidence="2">
    <location>
        <begin position="191"/>
        <end position="211"/>
    </location>
</feature>
<feature type="topological domain" description="Cytoplasmic" evidence="2">
    <location>
        <begin position="212"/>
        <end position="255"/>
    </location>
</feature>
<feature type="transmembrane region" description="Helical; Name=5" evidence="2">
    <location>
        <begin position="256"/>
        <end position="276"/>
    </location>
</feature>
<feature type="topological domain" description="Perinuclear space" evidence="2">
    <location>
        <position position="277"/>
    </location>
</feature>
<feature type="transmembrane region" description="Helical; Name=6" evidence="2">
    <location>
        <begin position="278"/>
        <end position="298"/>
    </location>
</feature>
<feature type="topological domain" description="Cytoplasmic" evidence="2">
    <location>
        <begin position="299"/>
        <end position="588"/>
    </location>
</feature>
<feature type="region of interest" description="Disordered" evidence="3">
    <location>
        <begin position="1"/>
        <end position="55"/>
    </location>
</feature>
<feature type="compositionally biased region" description="Polar residues" evidence="3">
    <location>
        <begin position="1"/>
        <end position="12"/>
    </location>
</feature>
<feature type="compositionally biased region" description="Low complexity" evidence="3">
    <location>
        <begin position="31"/>
        <end position="48"/>
    </location>
</feature>
<reference key="1">
    <citation type="journal article" date="1998" name="Science">
        <title>Genome sequence of the nematode C. elegans: a platform for investigating biology.</title>
        <authorList>
            <consortium name="The C. elegans sequencing consortium"/>
        </authorList>
    </citation>
    <scope>NUCLEOTIDE SEQUENCE [LARGE SCALE GENOMIC DNA]</scope>
    <source>
        <strain>Bristol N2</strain>
    </source>
</reference>
<reference key="2">
    <citation type="journal article" date="2022" name="Elife">
        <title>Ndc1 drives nuclear pore complex assembly independent of membrane biogenesis to promote nuclear formation and growth.</title>
        <authorList>
            <person name="Mauro M.S."/>
            <person name="Celma G."/>
            <person name="Zimyanin V."/>
            <person name="Magaj M.M."/>
            <person name="Gibson K.H."/>
            <person name="Redemann S."/>
            <person name="Bahmanyar S."/>
        </authorList>
    </citation>
    <scope>FUNCTION</scope>
    <scope>SUBCELLULAR LOCATION</scope>
    <scope>DISRUPTION PHENOTYPE</scope>
</reference>
<keyword id="KW-0472">Membrane</keyword>
<keyword id="KW-0509">mRNA transport</keyword>
<keyword id="KW-0906">Nuclear pore complex</keyword>
<keyword id="KW-0539">Nucleus</keyword>
<keyword id="KW-0653">Protein transport</keyword>
<keyword id="KW-1185">Reference proteome</keyword>
<keyword id="KW-0811">Translocation</keyword>
<keyword id="KW-0812">Transmembrane</keyword>
<keyword id="KW-1133">Transmembrane helix</keyword>
<keyword id="KW-0813">Transport</keyword>
<name>NDC1_CAEEL</name>
<dbReference type="EMBL" id="Z74026">
    <property type="protein sequence ID" value="CAD54122.1"/>
    <property type="molecule type" value="Genomic_DNA"/>
</dbReference>
<dbReference type="RefSeq" id="NP_505962.2">
    <property type="nucleotide sequence ID" value="NM_073561.5"/>
</dbReference>
<dbReference type="SMR" id="Q8I4N3"/>
<dbReference type="BioGRID" id="44632">
    <property type="interactions" value="3"/>
</dbReference>
<dbReference type="FunCoup" id="Q8I4N3">
    <property type="interactions" value="1893"/>
</dbReference>
<dbReference type="IntAct" id="Q8I4N3">
    <property type="interactions" value="1"/>
</dbReference>
<dbReference type="STRING" id="6239.B0240.4.1"/>
<dbReference type="PaxDb" id="6239-B0240.4"/>
<dbReference type="PeptideAtlas" id="Q8I4N3"/>
<dbReference type="EnsemblMetazoa" id="B0240.4.1">
    <property type="protein sequence ID" value="B0240.4.1"/>
    <property type="gene ID" value="WBGene00007118"/>
</dbReference>
<dbReference type="GeneID" id="179607"/>
<dbReference type="KEGG" id="cel:CELE_B0240.4"/>
<dbReference type="UCSC" id="B0240.4.1">
    <property type="organism name" value="c. elegans"/>
</dbReference>
<dbReference type="AGR" id="WB:WBGene00007118"/>
<dbReference type="CTD" id="179607"/>
<dbReference type="WormBase" id="B0240.4">
    <property type="protein sequence ID" value="CE31866"/>
    <property type="gene ID" value="WBGene00007118"/>
    <property type="gene designation" value="npp-22"/>
</dbReference>
<dbReference type="eggNOG" id="KOG3726">
    <property type="taxonomic scope" value="Eukaryota"/>
</dbReference>
<dbReference type="eggNOG" id="KOG4358">
    <property type="taxonomic scope" value="Eukaryota"/>
</dbReference>
<dbReference type="GeneTree" id="ENSGT00390000014590"/>
<dbReference type="HOGENOM" id="CLU_464804_0_0_1"/>
<dbReference type="InParanoid" id="Q8I4N3"/>
<dbReference type="OMA" id="ILKAIIC"/>
<dbReference type="OrthoDB" id="67850at2759"/>
<dbReference type="PhylomeDB" id="Q8I4N3"/>
<dbReference type="PRO" id="PR:Q8I4N3"/>
<dbReference type="Proteomes" id="UP000001940">
    <property type="component" value="Chromosome V"/>
</dbReference>
<dbReference type="Bgee" id="WBGene00007118">
    <property type="expression patterns" value="Expressed in germ line (C elegans) and 4 other cell types or tissues"/>
</dbReference>
<dbReference type="GO" id="GO:0031965">
    <property type="term" value="C:nuclear membrane"/>
    <property type="evidence" value="ECO:0007669"/>
    <property type="project" value="UniProtKB-SubCell"/>
</dbReference>
<dbReference type="GO" id="GO:0005643">
    <property type="term" value="C:nuclear pore"/>
    <property type="evidence" value="ECO:0000314"/>
    <property type="project" value="WormBase"/>
</dbReference>
<dbReference type="GO" id="GO:0070762">
    <property type="term" value="C:nuclear pore transmembrane ring"/>
    <property type="evidence" value="ECO:0000318"/>
    <property type="project" value="GO_Central"/>
</dbReference>
<dbReference type="GO" id="GO:0030674">
    <property type="term" value="F:protein-macromolecule adaptor activity"/>
    <property type="evidence" value="ECO:0000318"/>
    <property type="project" value="GO_Central"/>
</dbReference>
<dbReference type="GO" id="GO:0051028">
    <property type="term" value="P:mRNA transport"/>
    <property type="evidence" value="ECO:0007669"/>
    <property type="project" value="UniProtKB-KW"/>
</dbReference>
<dbReference type="GO" id="GO:0006999">
    <property type="term" value="P:nuclear pore organization"/>
    <property type="evidence" value="ECO:0000318"/>
    <property type="project" value="GO_Central"/>
</dbReference>
<dbReference type="GO" id="GO:0015031">
    <property type="term" value="P:protein transport"/>
    <property type="evidence" value="ECO:0007669"/>
    <property type="project" value="UniProtKB-KW"/>
</dbReference>
<dbReference type="InterPro" id="IPR019049">
    <property type="entry name" value="Nucleoporin_prot_Ndc1/Nup"/>
</dbReference>
<dbReference type="PANTHER" id="PTHR13269">
    <property type="entry name" value="NUCLEOPORIN NDC1"/>
    <property type="match status" value="1"/>
</dbReference>
<dbReference type="PANTHER" id="PTHR13269:SF6">
    <property type="entry name" value="NUCLEOPORIN NDC1"/>
    <property type="match status" value="1"/>
</dbReference>
<dbReference type="Pfam" id="PF09531">
    <property type="entry name" value="Ndc1_Nup"/>
    <property type="match status" value="1"/>
</dbReference>
<gene>
    <name evidence="7" type="primary">npp-22</name>
    <name evidence="5" type="synonym">ndc-1</name>
    <name type="ORF">B0240.4</name>
</gene>
<comment type="function">
    <text evidence="1 4">Component of the nuclear pore complex (NPC), which plays a key role in de novo assembly and insertion of NPC in the nuclear envelope (By similarity). Plays a role in postmitotic nuclear pore complex assembly potentially by promoting localization of nuclear pore complex proteins to the nuclear rim (PubMed:35852146).</text>
</comment>
<comment type="subcellular location">
    <subcellularLocation>
        <location evidence="1">Nucleus</location>
        <location evidence="1">Nuclear pore complex</location>
    </subcellularLocation>
    <subcellularLocation>
        <location evidence="4">Nucleus membrane</location>
        <topology evidence="1">Multi-pass membrane protein</topology>
    </subcellularLocation>
    <text evidence="1 4">Central core structure of the nuclear pore complex (By similarity). Localizes to the nuclear envelope at non-core regions after mitosis (PubMed:35852146).</text>
</comment>
<comment type="developmental stage">
    <text evidence="4">Expressed during embryonic development.</text>
</comment>
<comment type="disruption phenotype">
    <text evidence="4">Embryonic lethality ranges from 40% to 100% (PubMed:35852146). One-cell stage embryos show shorter lengths with decreased pronuclei diameter resulting in decreased embryo nuclear size (PubMed:35852146). Nascent nuclear envelopes in the non-core regions are more continuous and contain fewer holes that may contain nascent nuclear pore complexes following initiation of furrow ingression (PubMed:35852146). Two- and four-cell stage embryos contain half the normal density of nuclear pore complexes (PubMed:35852146). Reduced localization of inner ring component npp-19 and Y-complex proteins to the nuclear rim, such as npp-6/nup160, npp-15/nup133, npp-18/seh1, npp-2/nup85 and mel-28/elys (PubMed:35852146). RNAi-mediated knockdown shows reduced nuclear import and a decrease in diameter of pronuclei (PubMed:35852146).</text>
</comment>
<comment type="similarity">
    <text evidence="6">Belongs to the NDC1 family.</text>
</comment>
<accession>Q8I4N3</accession>
<organism>
    <name type="scientific">Caenorhabditis elegans</name>
    <dbReference type="NCBI Taxonomy" id="6239"/>
    <lineage>
        <taxon>Eukaryota</taxon>
        <taxon>Metazoa</taxon>
        <taxon>Ecdysozoa</taxon>
        <taxon>Nematoda</taxon>
        <taxon>Chromadorea</taxon>
        <taxon>Rhabditida</taxon>
        <taxon>Rhabditina</taxon>
        <taxon>Rhabditomorpha</taxon>
        <taxon>Rhabditoidea</taxon>
        <taxon>Rhabditidae</taxon>
        <taxon>Peloderinae</taxon>
        <taxon>Caenorhabditis</taxon>
    </lineage>
</organism>
<proteinExistence type="evidence at transcript level"/>
<evidence type="ECO:0000250" key="1">
    <source>
        <dbReference type="UniProtKB" id="Q6AX31"/>
    </source>
</evidence>
<evidence type="ECO:0000255" key="2"/>
<evidence type="ECO:0000256" key="3">
    <source>
        <dbReference type="SAM" id="MobiDB-lite"/>
    </source>
</evidence>
<evidence type="ECO:0000269" key="4">
    <source>
    </source>
</evidence>
<evidence type="ECO:0000303" key="5">
    <source>
    </source>
</evidence>
<evidence type="ECO:0000305" key="6"/>
<evidence type="ECO:0000312" key="7">
    <source>
        <dbReference type="WormBase" id="B0240.4"/>
    </source>
</evidence>
<sequence length="588" mass="65763">MMGDSHSSFTTTTDEHLYNQFSPGRRKNDFPAASSSSSSPNLRRSPNRTVSSPRVQQKPITIFDQIVDWFQAEISVRKRLAGAACGYLSTIFFIVTVSILKLTIWAPFSSVQDSLAWWIYPNAWASIIFVGIASVAMSLFSIIKFCKVDQLPRLAATDTFALAGVALEFVTRLTFVYTAFCVADFSFSREFAFVAISLAIAISSALVVFRSDYQLNFSHIQVNSVKTLIDFGTSLPYANISEICGIDAAISYTAAVALILVVGPMVSGFSAWWLLLNIPFHVVLFGLCFTQQFYSKISMKIVNQIVMKPISFPFPPPYTVHSPTPEQTRTLPNVIETDDSLLKFFALHDLRTIAWNDEKRRVDVFSLSQPGKHPRNWKAVSLPCVRMLDELCSRMTVSAARLVGYSWDDHDIENEDVPRDALLMPRKMREMAYRGTGQSRQQKSMAPIRSHNTQTVGLLSKISNFLGFGVTEKLVISRFDAHMNAYAAEALYMLVVDSMGEDRFGVVQKDLKDLITLLCKLIAAIDTYERAKASVADKSDVTFLRIVDASLKSSLQRVVTTFGSHLSSLNLPEEHSRTIRMICLTDEL</sequence>
<protein>
    <recommendedName>
        <fullName>Nucleoporin ndc-1</fullName>
    </recommendedName>
    <alternativeName>
        <fullName>Nucleoporin npp-22</fullName>
    </alternativeName>
</protein>